<accession>A5IMD8</accession>
<organism>
    <name type="scientific">Thermotoga petrophila (strain ATCC BAA-488 / DSM 13995 / JCM 10881 / RKU-1)</name>
    <dbReference type="NCBI Taxonomy" id="390874"/>
    <lineage>
        <taxon>Bacteria</taxon>
        <taxon>Thermotogati</taxon>
        <taxon>Thermotogota</taxon>
        <taxon>Thermotogae</taxon>
        <taxon>Thermotogales</taxon>
        <taxon>Thermotogaceae</taxon>
        <taxon>Thermotoga</taxon>
    </lineage>
</organism>
<reference key="1">
    <citation type="submission" date="2007-05" db="EMBL/GenBank/DDBJ databases">
        <title>Complete sequence of Thermotoga petrophila RKU-1.</title>
        <authorList>
            <consortium name="US DOE Joint Genome Institute"/>
            <person name="Copeland A."/>
            <person name="Lucas S."/>
            <person name="Lapidus A."/>
            <person name="Barry K."/>
            <person name="Glavina del Rio T."/>
            <person name="Dalin E."/>
            <person name="Tice H."/>
            <person name="Pitluck S."/>
            <person name="Sims D."/>
            <person name="Brettin T."/>
            <person name="Bruce D."/>
            <person name="Detter J.C."/>
            <person name="Han C."/>
            <person name="Tapia R."/>
            <person name="Schmutz J."/>
            <person name="Larimer F."/>
            <person name="Land M."/>
            <person name="Hauser L."/>
            <person name="Kyrpides N."/>
            <person name="Mikhailova N."/>
            <person name="Nelson K."/>
            <person name="Gogarten J.P."/>
            <person name="Noll K."/>
            <person name="Richardson P."/>
        </authorList>
    </citation>
    <scope>NUCLEOTIDE SEQUENCE [LARGE SCALE GENOMIC DNA]</scope>
    <source>
        <strain>ATCC BAA-488 / DSM 13995 / JCM 10881 / RKU-1</strain>
    </source>
</reference>
<keyword id="KW-0997">Cell inner membrane</keyword>
<keyword id="KW-1003">Cell membrane</keyword>
<keyword id="KW-0444">Lipid biosynthesis</keyword>
<keyword id="KW-0443">Lipid metabolism</keyword>
<keyword id="KW-0472">Membrane</keyword>
<keyword id="KW-0594">Phospholipid biosynthesis</keyword>
<keyword id="KW-1208">Phospholipid metabolism</keyword>
<keyword id="KW-0808">Transferase</keyword>
<keyword id="KW-0812">Transmembrane</keyword>
<keyword id="KW-1133">Transmembrane helix</keyword>
<comment type="function">
    <text evidence="1">Catalyzes the transfer of an acyl group from acyl-phosphate (acyl-PO(4)) to glycerol-3-phosphate (G3P) to form lysophosphatidic acid (LPA). This enzyme utilizes acyl-phosphate as fatty acyl donor, but not acyl-CoA or acyl-ACP.</text>
</comment>
<comment type="catalytic activity">
    <reaction evidence="1">
        <text>an acyl phosphate + sn-glycerol 3-phosphate = a 1-acyl-sn-glycero-3-phosphate + phosphate</text>
        <dbReference type="Rhea" id="RHEA:34075"/>
        <dbReference type="ChEBI" id="CHEBI:43474"/>
        <dbReference type="ChEBI" id="CHEBI:57597"/>
        <dbReference type="ChEBI" id="CHEBI:57970"/>
        <dbReference type="ChEBI" id="CHEBI:59918"/>
        <dbReference type="EC" id="2.3.1.275"/>
    </reaction>
</comment>
<comment type="pathway">
    <text evidence="1">Lipid metabolism; phospholipid metabolism.</text>
</comment>
<comment type="subunit">
    <text evidence="1">Probably interacts with PlsX.</text>
</comment>
<comment type="subcellular location">
    <subcellularLocation>
        <location evidence="1">Cell inner membrane</location>
        <topology evidence="1">Multi-pass membrane protein</topology>
    </subcellularLocation>
</comment>
<comment type="similarity">
    <text evidence="1">Belongs to the PlsY family.</text>
</comment>
<evidence type="ECO:0000255" key="1">
    <source>
        <dbReference type="HAMAP-Rule" id="MF_01043"/>
    </source>
</evidence>
<dbReference type="EC" id="2.3.1.275" evidence="1"/>
<dbReference type="EMBL" id="CP000702">
    <property type="protein sequence ID" value="ABQ47361.1"/>
    <property type="molecule type" value="Genomic_DNA"/>
</dbReference>
<dbReference type="RefSeq" id="WP_011943820.1">
    <property type="nucleotide sequence ID" value="NC_009486.1"/>
</dbReference>
<dbReference type="SMR" id="A5IMD8"/>
<dbReference type="STRING" id="390874.Tpet_1347"/>
<dbReference type="KEGG" id="tpt:Tpet_1347"/>
<dbReference type="eggNOG" id="COG0344">
    <property type="taxonomic scope" value="Bacteria"/>
</dbReference>
<dbReference type="HOGENOM" id="CLU_081254_7_1_0"/>
<dbReference type="UniPathway" id="UPA00085"/>
<dbReference type="Proteomes" id="UP000006558">
    <property type="component" value="Chromosome"/>
</dbReference>
<dbReference type="GO" id="GO:0005886">
    <property type="term" value="C:plasma membrane"/>
    <property type="evidence" value="ECO:0007669"/>
    <property type="project" value="UniProtKB-SubCell"/>
</dbReference>
<dbReference type="GO" id="GO:0043772">
    <property type="term" value="F:acyl-phosphate glycerol-3-phosphate acyltransferase activity"/>
    <property type="evidence" value="ECO:0007669"/>
    <property type="project" value="UniProtKB-UniRule"/>
</dbReference>
<dbReference type="GO" id="GO:0008654">
    <property type="term" value="P:phospholipid biosynthetic process"/>
    <property type="evidence" value="ECO:0007669"/>
    <property type="project" value="UniProtKB-UniRule"/>
</dbReference>
<dbReference type="HAMAP" id="MF_01043">
    <property type="entry name" value="PlsY"/>
    <property type="match status" value="1"/>
</dbReference>
<dbReference type="InterPro" id="IPR003811">
    <property type="entry name" value="G3P_acylTferase_PlsY"/>
</dbReference>
<dbReference type="NCBIfam" id="TIGR00023">
    <property type="entry name" value="glycerol-3-phosphate 1-O-acyltransferase PlsY"/>
    <property type="match status" value="1"/>
</dbReference>
<dbReference type="PANTHER" id="PTHR30309:SF0">
    <property type="entry name" value="GLYCEROL-3-PHOSPHATE ACYLTRANSFERASE-RELATED"/>
    <property type="match status" value="1"/>
</dbReference>
<dbReference type="PANTHER" id="PTHR30309">
    <property type="entry name" value="INNER MEMBRANE PROTEIN YGIH"/>
    <property type="match status" value="1"/>
</dbReference>
<dbReference type="Pfam" id="PF02660">
    <property type="entry name" value="G3P_acyltransf"/>
    <property type="match status" value="1"/>
</dbReference>
<dbReference type="SMART" id="SM01207">
    <property type="entry name" value="G3P_acyltransf"/>
    <property type="match status" value="1"/>
</dbReference>
<protein>
    <recommendedName>
        <fullName evidence="1">Glycerol-3-phosphate acyltransferase</fullName>
    </recommendedName>
    <alternativeName>
        <fullName evidence="1">Acyl-PO4 G3P acyltransferase</fullName>
    </alternativeName>
    <alternativeName>
        <fullName evidence="1">Acyl-phosphate--glycerol-3-phosphate acyltransferase</fullName>
    </alternativeName>
    <alternativeName>
        <fullName evidence="1">G3P acyltransferase</fullName>
        <shortName evidence="1">GPAT</shortName>
        <ecNumber evidence="1">2.3.1.275</ecNumber>
    </alternativeName>
    <alternativeName>
        <fullName evidence="1">Lysophosphatidic acid synthase</fullName>
        <shortName evidence="1">LPA synthase</shortName>
    </alternativeName>
</protein>
<sequence length="196" mass="21353">MGWWLFPILGYFIGSIPFSYLIPKWLKGIDVRKVGSGNVGATNAIRTTGPVVGGICLLLDALKGFFPVFIATTFSGDPKLVSLTAIATVLGHDFPIFMKFKGGKGVASTLGIIFCLSWPTGIVFTLTWLVIVMLTKYASLGSLVALYISALLGYLFKGYDTGMLILILAVLSTLRHSENIQRLLNGTERKVNLFKR</sequence>
<gene>
    <name evidence="1" type="primary">plsY</name>
    <name type="ordered locus">Tpet_1347</name>
</gene>
<name>PLSY_THEP1</name>
<proteinExistence type="inferred from homology"/>
<feature type="chain" id="PRO_1000064237" description="Glycerol-3-phosphate acyltransferase">
    <location>
        <begin position="1"/>
        <end position="196"/>
    </location>
</feature>
<feature type="transmembrane region" description="Helical" evidence="1">
    <location>
        <begin position="2"/>
        <end position="22"/>
    </location>
</feature>
<feature type="transmembrane region" description="Helical" evidence="1">
    <location>
        <begin position="51"/>
        <end position="71"/>
    </location>
</feature>
<feature type="transmembrane region" description="Helical" evidence="1">
    <location>
        <begin position="80"/>
        <end position="100"/>
    </location>
</feature>
<feature type="transmembrane region" description="Helical" evidence="1">
    <location>
        <begin position="112"/>
        <end position="132"/>
    </location>
</feature>
<feature type="transmembrane region" description="Helical" evidence="1">
    <location>
        <begin position="137"/>
        <end position="156"/>
    </location>
</feature>